<reference key="1">
    <citation type="journal article" date="1993" name="J. Bacteriol.">
        <title>Molecular cloning and characterization of the Candida albicans enolase gene.</title>
        <authorList>
            <person name="Mason A.B."/>
            <person name="Buckley H.R."/>
            <person name="Gorman J.A."/>
        </authorList>
    </citation>
    <scope>NUCLEOTIDE SEQUENCE [GENOMIC DNA]</scope>
    <source>
        <strain>ATCC 64385 / 1001</strain>
    </source>
</reference>
<reference key="2">
    <citation type="journal article" date="1992" name="J. Bacteriol.">
        <title>Molecular cloning of cDNA and analysis of protein secondary structure of Candida albicans enolase, an abundant, immunodominant glycolytic enzyme.</title>
        <authorList>
            <person name="Sundstrom P."/>
            <person name="Aliaga G.R."/>
        </authorList>
    </citation>
    <scope>NUCLEOTIDE SEQUENCE [MRNA]</scope>
    <scope>CATALYTIC ACTIVITY</scope>
</reference>
<reference key="3">
    <citation type="journal article" date="1993" name="FEMS Microbiol. Lett.">
        <title>Cloning and nucleotide sequence analysis of the Candida albicans enolase gene.</title>
        <authorList>
            <person name="Franklyn K.M."/>
            <person name="Warmington J.R."/>
        </authorList>
    </citation>
    <scope>NUCLEOTIDE SEQUENCE [GENOMIC DNA]</scope>
    <source>
        <strain>KEMH5</strain>
    </source>
</reference>
<reference key="4">
    <citation type="journal article" date="2004" name="Proc. Natl. Acad. Sci. U.S.A.">
        <title>The diploid genome sequence of Candida albicans.</title>
        <authorList>
            <person name="Jones T."/>
            <person name="Federspiel N.A."/>
            <person name="Chibana H."/>
            <person name="Dungan J."/>
            <person name="Kalman S."/>
            <person name="Magee B.B."/>
            <person name="Newport G."/>
            <person name="Thorstenson Y.R."/>
            <person name="Agabian N."/>
            <person name="Magee P.T."/>
            <person name="Davis R.W."/>
            <person name="Scherer S."/>
        </authorList>
    </citation>
    <scope>NUCLEOTIDE SEQUENCE [LARGE SCALE GENOMIC DNA]</scope>
    <source>
        <strain>SC5314 / ATCC MYA-2876</strain>
    </source>
</reference>
<reference key="5">
    <citation type="journal article" date="2007" name="Genome Biol.">
        <title>Assembly of the Candida albicans genome into sixteen supercontigs aligned on the eight chromosomes.</title>
        <authorList>
            <person name="van het Hoog M."/>
            <person name="Rast T.J."/>
            <person name="Martchenko M."/>
            <person name="Grindle S."/>
            <person name="Dignard D."/>
            <person name="Hogues H."/>
            <person name="Cuomo C."/>
            <person name="Berriman M."/>
            <person name="Scherer S."/>
            <person name="Magee B.B."/>
            <person name="Whiteway M."/>
            <person name="Chibana H."/>
            <person name="Nantel A."/>
            <person name="Magee P.T."/>
        </authorList>
    </citation>
    <scope>GENOME REANNOTATION</scope>
    <source>
        <strain>SC5314 / ATCC MYA-2876</strain>
    </source>
</reference>
<reference key="6">
    <citation type="journal article" date="2013" name="Genome Biol.">
        <title>Assembly of a phased diploid Candida albicans genome facilitates allele-specific measurements and provides a simple model for repeat and indel structure.</title>
        <authorList>
            <person name="Muzzey D."/>
            <person name="Schwartz K."/>
            <person name="Weissman J.S."/>
            <person name="Sherlock G."/>
        </authorList>
    </citation>
    <scope>NUCLEOTIDE SEQUENCE [LARGE SCALE GENOMIC DNA]</scope>
    <scope>GENOME REANNOTATION</scope>
    <source>
        <strain>SC5314 / ATCC MYA-2876</strain>
    </source>
</reference>
<organism>
    <name type="scientific">Candida albicans (strain SC5314 / ATCC MYA-2876)</name>
    <name type="common">Yeast</name>
    <dbReference type="NCBI Taxonomy" id="237561"/>
    <lineage>
        <taxon>Eukaryota</taxon>
        <taxon>Fungi</taxon>
        <taxon>Dikarya</taxon>
        <taxon>Ascomycota</taxon>
        <taxon>Saccharomycotina</taxon>
        <taxon>Pichiomycetes</taxon>
        <taxon>Debaryomycetaceae</taxon>
        <taxon>Candida/Lodderomyces clade</taxon>
        <taxon>Candida</taxon>
    </lineage>
</organism>
<dbReference type="EC" id="4.2.1.11" evidence="2"/>
<dbReference type="EMBL" id="L04943">
    <property type="protein sequence ID" value="AAB46358.1"/>
    <property type="molecule type" value="Genomic_DNA"/>
</dbReference>
<dbReference type="EMBL" id="M93712">
    <property type="protein sequence ID" value="AAA34341.1"/>
    <property type="molecule type" value="mRNA"/>
</dbReference>
<dbReference type="EMBL" id="L10290">
    <property type="protein sequence ID" value="AAA71939.1"/>
    <property type="molecule type" value="Genomic_DNA"/>
</dbReference>
<dbReference type="EMBL" id="CP017623">
    <property type="protein sequence ID" value="AOW26488.1"/>
    <property type="molecule type" value="Genomic_DNA"/>
</dbReference>
<dbReference type="PIR" id="A40624">
    <property type="entry name" value="A40624"/>
</dbReference>
<dbReference type="RefSeq" id="XP_711883.1">
    <property type="nucleotide sequence ID" value="XM_706790.2"/>
</dbReference>
<dbReference type="PDB" id="7V67">
    <property type="method" value="X-ray"/>
    <property type="resolution" value="2.00 A"/>
    <property type="chains" value="A/B/C/D=1-440"/>
</dbReference>
<dbReference type="PDB" id="7VRD">
    <property type="method" value="X-ray"/>
    <property type="resolution" value="1.70 A"/>
    <property type="chains" value="A/B/C/D=2-440"/>
</dbReference>
<dbReference type="PDBsum" id="7V67"/>
<dbReference type="PDBsum" id="7VRD"/>
<dbReference type="SMR" id="P30575"/>
<dbReference type="BioGRID" id="1229577">
    <property type="interactions" value="5"/>
</dbReference>
<dbReference type="FunCoup" id="P30575">
    <property type="interactions" value="1259"/>
</dbReference>
<dbReference type="STRING" id="237561.P30575"/>
<dbReference type="Allergome" id="785">
    <property type="allergen name" value="Cand a Enolase"/>
</dbReference>
<dbReference type="MoonDB" id="P30575">
    <property type="type" value="Curated"/>
</dbReference>
<dbReference type="MoonProt" id="P30575"/>
<dbReference type="ABCD" id="P30575">
    <property type="antibodies" value="3 sequenced antibodies"/>
</dbReference>
<dbReference type="EnsemblFungi" id="C1_08500C_A-T">
    <property type="protein sequence ID" value="C1_08500C_A-T-p1"/>
    <property type="gene ID" value="C1_08500C_A"/>
</dbReference>
<dbReference type="GeneID" id="3646493"/>
<dbReference type="KEGG" id="cal:CAALFM_C108500CA"/>
<dbReference type="CGD" id="CAL0000185645">
    <property type="gene designation" value="ENO1"/>
</dbReference>
<dbReference type="VEuPathDB" id="FungiDB:C1_08500C_A"/>
<dbReference type="eggNOG" id="KOG2670">
    <property type="taxonomic scope" value="Eukaryota"/>
</dbReference>
<dbReference type="HOGENOM" id="CLU_031223_0_0_1"/>
<dbReference type="InParanoid" id="P30575"/>
<dbReference type="OMA" id="RCMMSHR"/>
<dbReference type="OrthoDB" id="1739814at2759"/>
<dbReference type="UniPathway" id="UPA00109">
    <property type="reaction ID" value="UER00187"/>
</dbReference>
<dbReference type="PRO" id="PR:P30575"/>
<dbReference type="Proteomes" id="UP000000559">
    <property type="component" value="Chromosome 1"/>
</dbReference>
<dbReference type="GO" id="GO:0009986">
    <property type="term" value="C:cell surface"/>
    <property type="evidence" value="ECO:0000314"/>
    <property type="project" value="CGD"/>
</dbReference>
<dbReference type="GO" id="GO:0005829">
    <property type="term" value="C:cytosol"/>
    <property type="evidence" value="ECO:0000314"/>
    <property type="project" value="CGD"/>
</dbReference>
<dbReference type="GO" id="GO:0009897">
    <property type="term" value="C:external side of plasma membrane"/>
    <property type="evidence" value="ECO:0000314"/>
    <property type="project" value="CAFA"/>
</dbReference>
<dbReference type="GO" id="GO:0005576">
    <property type="term" value="C:extracellular region"/>
    <property type="evidence" value="ECO:0000314"/>
    <property type="project" value="CGD"/>
</dbReference>
<dbReference type="GO" id="GO:1903561">
    <property type="term" value="C:extracellular vesicle"/>
    <property type="evidence" value="ECO:0000314"/>
    <property type="project" value="CGD"/>
</dbReference>
<dbReference type="GO" id="GO:0062040">
    <property type="term" value="C:fungal biofilm matrix"/>
    <property type="evidence" value="ECO:0000314"/>
    <property type="project" value="CGD"/>
</dbReference>
<dbReference type="GO" id="GO:0009277">
    <property type="term" value="C:fungal-type cell wall"/>
    <property type="evidence" value="ECO:0000314"/>
    <property type="project" value="CGD"/>
</dbReference>
<dbReference type="GO" id="GO:0030446">
    <property type="term" value="C:hyphal cell wall"/>
    <property type="evidence" value="ECO:0000314"/>
    <property type="project" value="CGD"/>
</dbReference>
<dbReference type="GO" id="GO:0016020">
    <property type="term" value="C:membrane"/>
    <property type="evidence" value="ECO:0000314"/>
    <property type="project" value="CGD"/>
</dbReference>
<dbReference type="GO" id="GO:0005634">
    <property type="term" value="C:nucleus"/>
    <property type="evidence" value="ECO:0000314"/>
    <property type="project" value="CGD"/>
</dbReference>
<dbReference type="GO" id="GO:0000015">
    <property type="term" value="C:phosphopyruvate hydratase complex"/>
    <property type="evidence" value="ECO:0000250"/>
    <property type="project" value="CGD"/>
</dbReference>
<dbReference type="GO" id="GO:0005886">
    <property type="term" value="C:plasma membrane"/>
    <property type="evidence" value="ECO:0000314"/>
    <property type="project" value="CGD"/>
</dbReference>
<dbReference type="GO" id="GO:0030445">
    <property type="term" value="C:yeast-form cell wall"/>
    <property type="evidence" value="ECO:0000314"/>
    <property type="project" value="CGD"/>
</dbReference>
<dbReference type="GO" id="GO:0030985">
    <property type="term" value="F:high molecular weight kininogen binding"/>
    <property type="evidence" value="ECO:0000314"/>
    <property type="project" value="CGD"/>
</dbReference>
<dbReference type="GO" id="GO:0000287">
    <property type="term" value="F:magnesium ion binding"/>
    <property type="evidence" value="ECO:0007669"/>
    <property type="project" value="InterPro"/>
</dbReference>
<dbReference type="GO" id="GO:0004634">
    <property type="term" value="F:phosphopyruvate hydratase activity"/>
    <property type="evidence" value="ECO:0000314"/>
    <property type="project" value="CGD"/>
</dbReference>
<dbReference type="GO" id="GO:0003810">
    <property type="term" value="F:protein-glutamine gamma-glutamyltransferase activity"/>
    <property type="evidence" value="ECO:0000314"/>
    <property type="project" value="CGD"/>
</dbReference>
<dbReference type="GO" id="GO:0042730">
    <property type="term" value="P:fibrinolysis"/>
    <property type="evidence" value="ECO:0000353"/>
    <property type="project" value="CAFA"/>
</dbReference>
<dbReference type="GO" id="GO:0030447">
    <property type="term" value="P:filamentous growth"/>
    <property type="evidence" value="ECO:0000315"/>
    <property type="project" value="CGD"/>
</dbReference>
<dbReference type="GO" id="GO:0036180">
    <property type="term" value="P:filamentous growth of a population of unicellular organisms in response to biotic stimulus"/>
    <property type="evidence" value="ECO:0000315"/>
    <property type="project" value="CGD"/>
</dbReference>
<dbReference type="GO" id="GO:0071852">
    <property type="term" value="P:fungal-type cell wall organization or biogenesis"/>
    <property type="evidence" value="ECO:0000315"/>
    <property type="project" value="CGD"/>
</dbReference>
<dbReference type="GO" id="GO:0006094">
    <property type="term" value="P:gluconeogenesis"/>
    <property type="evidence" value="ECO:0000250"/>
    <property type="project" value="CGD"/>
</dbReference>
<dbReference type="GO" id="GO:0006096">
    <property type="term" value="P:glycolytic process"/>
    <property type="evidence" value="ECO:0000314"/>
    <property type="project" value="CGD"/>
</dbReference>
<dbReference type="GO" id="GO:0044409">
    <property type="term" value="P:symbiont entry into host"/>
    <property type="evidence" value="ECO:0000353"/>
    <property type="project" value="CGD"/>
</dbReference>
<dbReference type="GO" id="GO:0052553">
    <property type="term" value="P:symbiont-mediated perturbation of host immune response"/>
    <property type="evidence" value="ECO:0000314"/>
    <property type="project" value="CGD"/>
</dbReference>
<dbReference type="CDD" id="cd03313">
    <property type="entry name" value="enolase"/>
    <property type="match status" value="1"/>
</dbReference>
<dbReference type="FunFam" id="3.30.390.10:FF:000001">
    <property type="entry name" value="Enolase"/>
    <property type="match status" value="1"/>
</dbReference>
<dbReference type="FunFam" id="3.20.20.120:FF:000002">
    <property type="entry name" value="Enolase 1"/>
    <property type="match status" value="1"/>
</dbReference>
<dbReference type="Gene3D" id="3.20.20.120">
    <property type="entry name" value="Enolase-like C-terminal domain"/>
    <property type="match status" value="1"/>
</dbReference>
<dbReference type="Gene3D" id="3.30.390.10">
    <property type="entry name" value="Enolase-like, N-terminal domain"/>
    <property type="match status" value="1"/>
</dbReference>
<dbReference type="HAMAP" id="MF_00318">
    <property type="entry name" value="Enolase"/>
    <property type="match status" value="1"/>
</dbReference>
<dbReference type="InterPro" id="IPR000941">
    <property type="entry name" value="Enolase"/>
</dbReference>
<dbReference type="InterPro" id="IPR036849">
    <property type="entry name" value="Enolase-like_C_sf"/>
</dbReference>
<dbReference type="InterPro" id="IPR029017">
    <property type="entry name" value="Enolase-like_N"/>
</dbReference>
<dbReference type="InterPro" id="IPR020810">
    <property type="entry name" value="Enolase_C"/>
</dbReference>
<dbReference type="InterPro" id="IPR020809">
    <property type="entry name" value="Enolase_CS"/>
</dbReference>
<dbReference type="InterPro" id="IPR020811">
    <property type="entry name" value="Enolase_N"/>
</dbReference>
<dbReference type="NCBIfam" id="TIGR01060">
    <property type="entry name" value="eno"/>
    <property type="match status" value="1"/>
</dbReference>
<dbReference type="PANTHER" id="PTHR11902">
    <property type="entry name" value="ENOLASE"/>
    <property type="match status" value="1"/>
</dbReference>
<dbReference type="PANTHER" id="PTHR11902:SF1">
    <property type="entry name" value="ENOLASE"/>
    <property type="match status" value="1"/>
</dbReference>
<dbReference type="Pfam" id="PF00113">
    <property type="entry name" value="Enolase_C"/>
    <property type="match status" value="1"/>
</dbReference>
<dbReference type="Pfam" id="PF03952">
    <property type="entry name" value="Enolase_N"/>
    <property type="match status" value="1"/>
</dbReference>
<dbReference type="PIRSF" id="PIRSF001400">
    <property type="entry name" value="Enolase"/>
    <property type="match status" value="1"/>
</dbReference>
<dbReference type="PRINTS" id="PR00148">
    <property type="entry name" value="ENOLASE"/>
</dbReference>
<dbReference type="SFLD" id="SFLDS00001">
    <property type="entry name" value="Enolase"/>
    <property type="match status" value="1"/>
</dbReference>
<dbReference type="SFLD" id="SFLDF00002">
    <property type="entry name" value="enolase"/>
    <property type="match status" value="1"/>
</dbReference>
<dbReference type="SMART" id="SM01192">
    <property type="entry name" value="Enolase_C"/>
    <property type="match status" value="1"/>
</dbReference>
<dbReference type="SMART" id="SM01193">
    <property type="entry name" value="Enolase_N"/>
    <property type="match status" value="1"/>
</dbReference>
<dbReference type="SUPFAM" id="SSF51604">
    <property type="entry name" value="Enolase C-terminal domain-like"/>
    <property type="match status" value="1"/>
</dbReference>
<dbReference type="SUPFAM" id="SSF54826">
    <property type="entry name" value="Enolase N-terminal domain-like"/>
    <property type="match status" value="1"/>
</dbReference>
<dbReference type="PROSITE" id="PS00164">
    <property type="entry name" value="ENOLASE"/>
    <property type="match status" value="1"/>
</dbReference>
<accession>P30575</accession>
<accession>A0A1D8PEA6</accession>
<accession>Q59QC3</accession>
<comment type="catalytic activity">
    <reaction evidence="2">
        <text>(2R)-2-phosphoglycerate = phosphoenolpyruvate + H2O</text>
        <dbReference type="Rhea" id="RHEA:10164"/>
        <dbReference type="ChEBI" id="CHEBI:15377"/>
        <dbReference type="ChEBI" id="CHEBI:58289"/>
        <dbReference type="ChEBI" id="CHEBI:58702"/>
        <dbReference type="EC" id="4.2.1.11"/>
    </reaction>
</comment>
<comment type="cofactor">
    <cofactor>
        <name>Mg(2+)</name>
        <dbReference type="ChEBI" id="CHEBI:18420"/>
    </cofactor>
    <text>Mg(2+) is required for catalysis and for stabilizing the dimer.</text>
</comment>
<comment type="pathway">
    <text>Carbohydrate degradation; glycolysis; pyruvate from D-glyceraldehyde 3-phosphate: step 4/5.</text>
</comment>
<comment type="subunit">
    <text evidence="1">Homodimer.</text>
</comment>
<comment type="subcellular location">
    <subcellularLocation>
        <location evidence="1">Cytoplasm</location>
    </subcellularLocation>
</comment>
<comment type="similarity">
    <text evidence="3">Belongs to the enolase family.</text>
</comment>
<protein>
    <recommendedName>
        <fullName>Enolase 1</fullName>
        <ecNumber evidence="2">4.2.1.11</ecNumber>
    </recommendedName>
    <alternativeName>
        <fullName>2-phospho-D-glycerate hydro-lyase</fullName>
    </alternativeName>
    <alternativeName>
        <fullName>2-phosphoglycerate dehydratase</fullName>
    </alternativeName>
</protein>
<proteinExistence type="evidence at protein level"/>
<evidence type="ECO:0000250" key="1"/>
<evidence type="ECO:0000269" key="2">
    <source>
    </source>
</evidence>
<evidence type="ECO:0000305" key="3"/>
<evidence type="ECO:0007829" key="4">
    <source>
        <dbReference type="PDB" id="7V67"/>
    </source>
</evidence>
<evidence type="ECO:0007829" key="5">
    <source>
        <dbReference type="PDB" id="7VRD"/>
    </source>
</evidence>
<gene>
    <name type="primary">ENO1</name>
    <name type="ordered locus">CAALFM_C108500CA</name>
    <name type="ORF">CaO19.395</name>
    <name type="ORF">CaO19.8025</name>
</gene>
<feature type="chain" id="PRO_0000134043" description="Enolase 1">
    <location>
        <begin position="1"/>
        <end position="440"/>
    </location>
</feature>
<feature type="active site" description="Proton donor" evidence="1">
    <location>
        <position position="213"/>
    </location>
</feature>
<feature type="active site" description="Proton acceptor" evidence="1">
    <location>
        <position position="349"/>
    </location>
</feature>
<feature type="binding site" evidence="1">
    <location>
        <position position="161"/>
    </location>
    <ligand>
        <name>substrate</name>
    </ligand>
</feature>
<feature type="binding site" evidence="1">
    <location>
        <position position="170"/>
    </location>
    <ligand>
        <name>substrate</name>
    </ligand>
</feature>
<feature type="binding site" evidence="1">
    <location>
        <position position="248"/>
    </location>
    <ligand>
        <name>Mg(2+)</name>
        <dbReference type="ChEBI" id="CHEBI:18420"/>
    </ligand>
</feature>
<feature type="binding site" evidence="1">
    <location>
        <position position="297"/>
    </location>
    <ligand>
        <name>Mg(2+)</name>
        <dbReference type="ChEBI" id="CHEBI:18420"/>
    </ligand>
</feature>
<feature type="binding site" evidence="1">
    <location>
        <position position="297"/>
    </location>
    <ligand>
        <name>substrate</name>
    </ligand>
</feature>
<feature type="binding site" evidence="1">
    <location>
        <position position="324"/>
    </location>
    <ligand>
        <name>Mg(2+)</name>
        <dbReference type="ChEBI" id="CHEBI:18420"/>
    </ligand>
</feature>
<feature type="binding site" evidence="1">
    <location>
        <position position="324"/>
    </location>
    <ligand>
        <name>substrate</name>
    </ligand>
</feature>
<feature type="binding site" evidence="1">
    <location>
        <begin position="376"/>
        <end position="379"/>
    </location>
    <ligand>
        <name>substrate</name>
    </ligand>
</feature>
<feature type="binding site" evidence="1">
    <location>
        <position position="400"/>
    </location>
    <ligand>
        <name>substrate</name>
    </ligand>
</feature>
<feature type="strand" evidence="5">
    <location>
        <begin position="5"/>
        <end position="13"/>
    </location>
</feature>
<feature type="strand" evidence="5">
    <location>
        <begin position="19"/>
        <end position="27"/>
    </location>
</feature>
<feature type="strand" evidence="5">
    <location>
        <begin position="30"/>
        <end position="35"/>
    </location>
</feature>
<feature type="helix" evidence="5">
    <location>
        <begin position="58"/>
        <end position="60"/>
    </location>
</feature>
<feature type="helix" evidence="5">
    <location>
        <begin position="64"/>
        <end position="72"/>
    </location>
</feature>
<feature type="helix" evidence="5">
    <location>
        <begin position="74"/>
        <end position="81"/>
    </location>
</feature>
<feature type="helix" evidence="5">
    <location>
        <begin position="88"/>
        <end position="99"/>
    </location>
</feature>
<feature type="turn" evidence="5">
    <location>
        <begin position="105"/>
        <end position="107"/>
    </location>
</feature>
<feature type="helix" evidence="5">
    <location>
        <begin position="109"/>
        <end position="127"/>
    </location>
</feature>
<feature type="helix" evidence="5">
    <location>
        <begin position="131"/>
        <end position="138"/>
    </location>
</feature>
<feature type="strand" evidence="5">
    <location>
        <begin position="143"/>
        <end position="148"/>
    </location>
</feature>
<feature type="strand" evidence="5">
    <location>
        <begin position="150"/>
        <end position="157"/>
    </location>
</feature>
<feature type="helix" evidence="5">
    <location>
        <begin position="159"/>
        <end position="161"/>
    </location>
</feature>
<feature type="strand" evidence="5">
    <location>
        <begin position="162"/>
        <end position="165"/>
    </location>
</feature>
<feature type="strand" evidence="5">
    <location>
        <begin position="170"/>
        <end position="174"/>
    </location>
</feature>
<feature type="strand" evidence="5">
    <location>
        <begin position="177"/>
        <end position="180"/>
    </location>
</feature>
<feature type="helix" evidence="5">
    <location>
        <begin position="181"/>
        <end position="203"/>
    </location>
</feature>
<feature type="helix" evidence="5">
    <location>
        <begin position="205"/>
        <end position="208"/>
    </location>
</feature>
<feature type="helix" evidence="5">
    <location>
        <begin position="223"/>
        <end position="237"/>
    </location>
</feature>
<feature type="strand" evidence="5">
    <location>
        <begin position="244"/>
        <end position="248"/>
    </location>
</feature>
<feature type="helix" evidence="5">
    <location>
        <begin position="251"/>
        <end position="254"/>
    </location>
</feature>
<feature type="turn" evidence="5">
    <location>
        <begin position="262"/>
        <end position="265"/>
    </location>
</feature>
<feature type="helix" evidence="5">
    <location>
        <begin position="271"/>
        <end position="273"/>
    </location>
</feature>
<feature type="helix" evidence="5">
    <location>
        <begin position="277"/>
        <end position="290"/>
    </location>
</feature>
<feature type="strand" evidence="5">
    <location>
        <begin position="293"/>
        <end position="297"/>
    </location>
</feature>
<feature type="helix" evidence="5">
    <location>
        <begin position="305"/>
        <end position="315"/>
    </location>
</feature>
<feature type="turn" evidence="5">
    <location>
        <begin position="316"/>
        <end position="318"/>
    </location>
</feature>
<feature type="strand" evidence="5">
    <location>
        <begin position="319"/>
        <end position="324"/>
    </location>
</feature>
<feature type="turn" evidence="5">
    <location>
        <begin position="325"/>
        <end position="329"/>
    </location>
</feature>
<feature type="helix" evidence="5">
    <location>
        <begin position="331"/>
        <end position="340"/>
    </location>
</feature>
<feature type="strand" evidence="5">
    <location>
        <begin position="344"/>
        <end position="348"/>
    </location>
</feature>
<feature type="helix" evidence="5">
    <location>
        <begin position="350"/>
        <end position="353"/>
    </location>
</feature>
<feature type="helix" evidence="5">
    <location>
        <begin position="356"/>
        <end position="368"/>
    </location>
</feature>
<feature type="strand" evidence="5">
    <location>
        <begin position="372"/>
        <end position="376"/>
    </location>
</feature>
<feature type="helix" evidence="5">
    <location>
        <begin position="386"/>
        <end position="393"/>
    </location>
</feature>
<feature type="strand" evidence="5">
    <location>
        <begin position="397"/>
        <end position="400"/>
    </location>
</feature>
<feature type="strand" evidence="4">
    <location>
        <begin position="404"/>
        <end position="406"/>
    </location>
</feature>
<feature type="helix" evidence="5">
    <location>
        <begin position="407"/>
        <end position="423"/>
    </location>
</feature>
<feature type="helix" evidence="5">
    <location>
        <begin position="424"/>
        <end position="426"/>
    </location>
</feature>
<feature type="strand" evidence="5">
    <location>
        <begin position="427"/>
        <end position="429"/>
    </location>
</feature>
<feature type="helix" evidence="5">
    <location>
        <begin position="431"/>
        <end position="439"/>
    </location>
</feature>
<sequence>MSYATKIHARYVYDSRGNPTVEVDFTTDKGLFRSIVPSGASTGVHEALELRDGDKSKWLGKGVLKAVANVNDIIAPALIKAKIDVVDQAKIDEFLLSLDGTPNKSKLGANAILGVSLAAANAAAAAQGIPLYKHIANISNAKKGKFVLPVPFQNVLNGGSHAGGALAFQEFMIAPTGVSTFSEALRIGSEVYHNLKSLTKKKYGQSAGNVGDEGGVAPDIKTPKEALDLIMDAIDKAGYKGKVGIAMDVASSEFYKDGKYDLDFKNPESDPSKWLSGPQLADLYEQLISEYPIVSIEDPFAEDDWDAWVHFFERVGDKIQIVGDDLTVTNPTRIKTAIEKKAANALLLKVNQIGTLTESIQAANDSYAAGWGVMVSHRSGETEDTFIADLSVGLRSGQIKTGAPARSERLAKLNQILRIEEELGSEAIYAGKDFQKASQL</sequence>
<name>ENO1_CANAL</name>
<keyword id="KW-0002">3D-structure</keyword>
<keyword id="KW-0963">Cytoplasm</keyword>
<keyword id="KW-0324">Glycolysis</keyword>
<keyword id="KW-0456">Lyase</keyword>
<keyword id="KW-0460">Magnesium</keyword>
<keyword id="KW-0479">Metal-binding</keyword>
<keyword id="KW-1185">Reference proteome</keyword>